<dbReference type="EC" id="1.3.7.11" evidence="1 2"/>
<dbReference type="EMBL" id="AE010299">
    <property type="protein sequence ID" value="AAM04898.1"/>
    <property type="molecule type" value="Genomic_DNA"/>
</dbReference>
<dbReference type="RefSeq" id="WP_011021498.1">
    <property type="nucleotide sequence ID" value="NC_003552.1"/>
</dbReference>
<dbReference type="SMR" id="Q8TQQ6"/>
<dbReference type="FunCoup" id="Q8TQQ6">
    <property type="interactions" value="56"/>
</dbReference>
<dbReference type="STRING" id="188937.MA_1484"/>
<dbReference type="EnsemblBacteria" id="AAM04898">
    <property type="protein sequence ID" value="AAM04898"/>
    <property type="gene ID" value="MA_1484"/>
</dbReference>
<dbReference type="GeneID" id="1473372"/>
<dbReference type="KEGG" id="mac:MA_1484"/>
<dbReference type="HOGENOM" id="CLU_024648_0_0_2"/>
<dbReference type="InParanoid" id="Q8TQQ6"/>
<dbReference type="OrthoDB" id="6062at2157"/>
<dbReference type="PhylomeDB" id="Q8TQQ6"/>
<dbReference type="BioCyc" id="MetaCyc:MONOMER-19243"/>
<dbReference type="BRENDA" id="1.3.7.11">
    <property type="organism ID" value="7224"/>
</dbReference>
<dbReference type="UniPathway" id="UPA00940"/>
<dbReference type="Proteomes" id="UP000002487">
    <property type="component" value="Chromosome"/>
</dbReference>
<dbReference type="GO" id="GO:0016020">
    <property type="term" value="C:membrane"/>
    <property type="evidence" value="ECO:0007669"/>
    <property type="project" value="GOC"/>
</dbReference>
<dbReference type="GO" id="GO:0050660">
    <property type="term" value="F:flavin adenine dinucleotide binding"/>
    <property type="evidence" value="ECO:0007669"/>
    <property type="project" value="UniProtKB-UniRule"/>
</dbReference>
<dbReference type="GO" id="GO:0045550">
    <property type="term" value="F:geranylgeranyl reductase activity"/>
    <property type="evidence" value="ECO:0007669"/>
    <property type="project" value="InterPro"/>
</dbReference>
<dbReference type="GO" id="GO:0016636">
    <property type="term" value="F:oxidoreductase activity, acting on the CH-CH group of donors, iron-sulfur protein as acceptor"/>
    <property type="evidence" value="ECO:0007669"/>
    <property type="project" value="UniProtKB-UniRule"/>
</dbReference>
<dbReference type="GO" id="GO:0016628">
    <property type="term" value="F:oxidoreductase activity, acting on the CH-CH group of donors, NAD or NADP as acceptor"/>
    <property type="evidence" value="ECO:0007669"/>
    <property type="project" value="InterPro"/>
</dbReference>
<dbReference type="GO" id="GO:0046474">
    <property type="term" value="P:glycerophospholipid biosynthetic process"/>
    <property type="evidence" value="ECO:0007669"/>
    <property type="project" value="UniProtKB-UniRule"/>
</dbReference>
<dbReference type="GO" id="GO:0046467">
    <property type="term" value="P:membrane lipid biosynthetic process"/>
    <property type="evidence" value="ECO:0007669"/>
    <property type="project" value="InterPro"/>
</dbReference>
<dbReference type="Gene3D" id="3.30.9.10">
    <property type="entry name" value="D-Amino Acid Oxidase, subunit A, domain 2"/>
    <property type="match status" value="1"/>
</dbReference>
<dbReference type="Gene3D" id="3.50.50.60">
    <property type="entry name" value="FAD/NAD(P)-binding domain"/>
    <property type="match status" value="1"/>
</dbReference>
<dbReference type="HAMAP" id="MF_01287">
    <property type="entry name" value="DGGGPL_reductase"/>
    <property type="match status" value="1"/>
</dbReference>
<dbReference type="InterPro" id="IPR023590">
    <property type="entry name" value="DGGGPL_reductase"/>
</dbReference>
<dbReference type="InterPro" id="IPR036188">
    <property type="entry name" value="FAD/NAD-bd_sf"/>
</dbReference>
<dbReference type="InterPro" id="IPR011777">
    <property type="entry name" value="Geranylgeranyl_Rdtase_fam"/>
</dbReference>
<dbReference type="InterPro" id="IPR050407">
    <property type="entry name" value="Geranylgeranyl_reductase"/>
</dbReference>
<dbReference type="InterPro" id="IPR054715">
    <property type="entry name" value="GGR_cat"/>
</dbReference>
<dbReference type="NCBIfam" id="TIGR02032">
    <property type="entry name" value="GG-red-SF"/>
    <property type="match status" value="1"/>
</dbReference>
<dbReference type="PANTHER" id="PTHR42685:SF18">
    <property type="entry name" value="DIGERANYLGERANYLGLYCEROPHOSPHOLIPID REDUCTASE"/>
    <property type="match status" value="1"/>
</dbReference>
<dbReference type="PANTHER" id="PTHR42685">
    <property type="entry name" value="GERANYLGERANYL DIPHOSPHATE REDUCTASE"/>
    <property type="match status" value="1"/>
</dbReference>
<dbReference type="Pfam" id="PF12831">
    <property type="entry name" value="FAD_oxidored"/>
    <property type="match status" value="1"/>
</dbReference>
<dbReference type="Pfam" id="PF22578">
    <property type="entry name" value="GGR_cat"/>
    <property type="match status" value="1"/>
</dbReference>
<dbReference type="PRINTS" id="PR00420">
    <property type="entry name" value="RNGMNOXGNASE"/>
</dbReference>
<dbReference type="SUPFAM" id="SSF51905">
    <property type="entry name" value="FAD/NAD(P)-binding domain"/>
    <property type="match status" value="1"/>
</dbReference>
<accession>Q8TQQ6</accession>
<evidence type="ECO:0000255" key="1">
    <source>
        <dbReference type="HAMAP-Rule" id="MF_01287"/>
    </source>
</evidence>
<evidence type="ECO:0000269" key="2">
    <source>
    </source>
</evidence>
<evidence type="ECO:0000303" key="3">
    <source>
    </source>
</evidence>
<evidence type="ECO:0000305" key="4">
    <source>
    </source>
</evidence>
<organism>
    <name type="scientific">Methanosarcina acetivorans (strain ATCC 35395 / DSM 2834 / JCM 12185 / C2A)</name>
    <dbReference type="NCBI Taxonomy" id="188937"/>
    <lineage>
        <taxon>Archaea</taxon>
        <taxon>Methanobacteriati</taxon>
        <taxon>Methanobacteriota</taxon>
        <taxon>Stenosarchaea group</taxon>
        <taxon>Methanomicrobia</taxon>
        <taxon>Methanosarcinales</taxon>
        <taxon>Methanosarcinaceae</taxon>
        <taxon>Methanosarcina</taxon>
    </lineage>
</organism>
<comment type="function">
    <text evidence="1 2">Is involved in the reduction of 2,3-digeranylgeranylglycerophospholipids (unsaturated archaeols) into 2,3-diphytanylglycerophospholipids (saturated archaeols) in the biosynthesis of archaeal membrane lipids. Catalyzes the formation of archaetidic acid (2,3-di-O-phytanyl-sn-glyceryl phosphate) from 2,3-di-O-geranylgeranylglyceryl phosphate (DGGGP) via the hydrogenation of each double bond of the isoprenoid chains (By similarity) (PubMed:24214941). Requires the adjacently encoded ferredoxin MA_1485 as the electron donor (PubMed:24214941). Is also probably able to reduce double bonds of geranyl groups in CDP-2,3-bis-O-(geranylgeranyl)-sn-glycerol and archaetidylserine, thus acting at various stages in the biosynthesis of archaeal membrane lipids (By similarity).</text>
</comment>
<comment type="catalytic activity">
    <reaction evidence="1 2">
        <text>a 2,3-bis-O-phytanyl-sn-glycerol 1-phospholipid + 8 oxidized 2[4Fe-4S]-[ferredoxin] = a 2,3-bis-O-(geranylgeranyl)-sn-glycerol 1-phospholipid + 8 reduced 2[4Fe-4S]-[ferredoxin] + 16 H(+)</text>
        <dbReference type="Rhea" id="RHEA:54324"/>
        <dbReference type="Rhea" id="RHEA-COMP:10002"/>
        <dbReference type="Rhea" id="RHEA-COMP:10004"/>
        <dbReference type="ChEBI" id="CHEBI:15378"/>
        <dbReference type="ChEBI" id="CHEBI:33722"/>
        <dbReference type="ChEBI" id="CHEBI:33723"/>
        <dbReference type="ChEBI" id="CHEBI:138139"/>
        <dbReference type="ChEBI" id="CHEBI:138140"/>
        <dbReference type="EC" id="1.3.7.11"/>
    </reaction>
    <physiologicalReaction direction="right-to-left" evidence="4">
        <dbReference type="Rhea" id="RHEA:54326"/>
    </physiologicalReaction>
</comment>
<comment type="catalytic activity">
    <reaction evidence="4">
        <text>2,3-bis-O-(phytanyl)-sn-glycerol 1-phosphate + 8 oxidized 2[4Fe-4S]-[ferredoxin] = 2,3-bis-O-(geranylgeranyl)-sn-glycerol 1-phosphate + 8 reduced 2[4Fe-4S]-[ferredoxin] + 16 H(+)</text>
        <dbReference type="Rhea" id="RHEA:36159"/>
        <dbReference type="Rhea" id="RHEA-COMP:10002"/>
        <dbReference type="Rhea" id="RHEA-COMP:10004"/>
        <dbReference type="ChEBI" id="CHEBI:15378"/>
        <dbReference type="ChEBI" id="CHEBI:33722"/>
        <dbReference type="ChEBI" id="CHEBI:33723"/>
        <dbReference type="ChEBI" id="CHEBI:58837"/>
        <dbReference type="ChEBI" id="CHEBI:73125"/>
        <dbReference type="EC" id="1.3.7.11"/>
    </reaction>
    <physiologicalReaction direction="right-to-left" evidence="4">
        <dbReference type="Rhea" id="RHEA:36161"/>
    </physiologicalReaction>
</comment>
<comment type="catalytic activity">
    <reaction evidence="1">
        <text>a 2,3-bis-O-phytanyl-sn-glycerol 1-phospholipid + 8 A = a 2,3-bis-O-(geranylgeranyl)-sn-glycerol 1-phospholipid + 8 AH2</text>
        <dbReference type="Rhea" id="RHEA:64376"/>
        <dbReference type="ChEBI" id="CHEBI:13193"/>
        <dbReference type="ChEBI" id="CHEBI:17499"/>
        <dbReference type="ChEBI" id="CHEBI:138139"/>
        <dbReference type="ChEBI" id="CHEBI:138140"/>
    </reaction>
    <physiologicalReaction direction="right-to-left" evidence="1">
        <dbReference type="Rhea" id="RHEA:64378"/>
    </physiologicalReaction>
</comment>
<comment type="catalytic activity">
    <reaction evidence="1">
        <text>CDP-2,3-bis-O-(geranylgeranyl)-sn-glycerol + 8 AH2 = CDP-2,3-bis-O-(phytanyl)-sn-glycerol + 8 A</text>
        <dbReference type="Rhea" id="RHEA:84207"/>
        <dbReference type="ChEBI" id="CHEBI:13193"/>
        <dbReference type="ChEBI" id="CHEBI:17499"/>
        <dbReference type="ChEBI" id="CHEBI:58838"/>
        <dbReference type="ChEBI" id="CHEBI:74004"/>
    </reaction>
    <physiologicalReaction direction="left-to-right" evidence="1">
        <dbReference type="Rhea" id="RHEA:84208"/>
    </physiologicalReaction>
</comment>
<comment type="catalytic activity">
    <reaction evidence="1">
        <text>archaetidylserine + 8 AH2 = 2,3-bis-O-phytanyl-sn-glycero-3-phospho-L-serine + 8 A</text>
        <dbReference type="Rhea" id="RHEA:84215"/>
        <dbReference type="ChEBI" id="CHEBI:13193"/>
        <dbReference type="ChEBI" id="CHEBI:17499"/>
        <dbReference type="ChEBI" id="CHEBI:71517"/>
        <dbReference type="ChEBI" id="CHEBI:74853"/>
    </reaction>
    <physiologicalReaction direction="left-to-right" evidence="1">
        <dbReference type="Rhea" id="RHEA:84216"/>
    </physiologicalReaction>
</comment>
<comment type="cofactor">
    <cofactor evidence="1">
        <name>FAD</name>
        <dbReference type="ChEBI" id="CHEBI:57692"/>
    </cofactor>
    <text evidence="1">Binds 1 FAD per subunit.</text>
</comment>
<comment type="pathway">
    <text evidence="1 4">Membrane lipid metabolism; glycerophospholipid metabolism.</text>
</comment>
<comment type="miscellaneous">
    <text evidence="1">Reduction reaction proceeds via syn addition of hydrogen for double bonds.</text>
</comment>
<comment type="similarity">
    <text evidence="1">Belongs to the geranylgeranyl reductase family. DGGGPL reductase subfamily.</text>
</comment>
<keyword id="KW-0274">FAD</keyword>
<keyword id="KW-0285">Flavoprotein</keyword>
<keyword id="KW-0444">Lipid biosynthesis</keyword>
<keyword id="KW-0443">Lipid metabolism</keyword>
<keyword id="KW-0560">Oxidoreductase</keyword>
<keyword id="KW-0594">Phospholipid biosynthesis</keyword>
<keyword id="KW-1208">Phospholipid metabolism</keyword>
<keyword id="KW-1185">Reference proteome</keyword>
<feature type="chain" id="PRO_0000351453" description="Digeranylgeranylglycerophospholipid reductase">
    <location>
        <begin position="1"/>
        <end position="407"/>
    </location>
</feature>
<feature type="binding site" evidence="1">
    <location>
        <position position="15"/>
    </location>
    <ligand>
        <name>FAD</name>
        <dbReference type="ChEBI" id="CHEBI:57692"/>
    </ligand>
</feature>
<feature type="binding site" evidence="1">
    <location>
        <position position="34"/>
    </location>
    <ligand>
        <name>FAD</name>
        <dbReference type="ChEBI" id="CHEBI:57692"/>
    </ligand>
</feature>
<feature type="binding site" evidence="1">
    <location>
        <position position="45"/>
    </location>
    <ligand>
        <name>FAD</name>
        <dbReference type="ChEBI" id="CHEBI:57692"/>
    </ligand>
</feature>
<feature type="binding site" evidence="1">
    <location>
        <position position="46"/>
    </location>
    <ligand>
        <name>FAD</name>
        <dbReference type="ChEBI" id="CHEBI:57692"/>
    </ligand>
</feature>
<feature type="binding site" evidence="1">
    <location>
        <position position="48"/>
    </location>
    <ligand>
        <name>FAD</name>
        <dbReference type="ChEBI" id="CHEBI:57692"/>
    </ligand>
</feature>
<feature type="binding site" evidence="1">
    <location>
        <position position="99"/>
    </location>
    <ligand>
        <name>FAD</name>
        <dbReference type="ChEBI" id="CHEBI:57692"/>
    </ligand>
</feature>
<feature type="binding site" evidence="1">
    <location>
        <position position="123"/>
    </location>
    <ligand>
        <name>FAD</name>
        <dbReference type="ChEBI" id="CHEBI:57692"/>
    </ligand>
</feature>
<feature type="binding site" evidence="1">
    <location>
        <position position="281"/>
    </location>
    <ligand>
        <name>FAD</name>
        <dbReference type="ChEBI" id="CHEBI:57692"/>
    </ligand>
</feature>
<feature type="binding site" evidence="1">
    <location>
        <position position="293"/>
    </location>
    <ligand>
        <name>FAD</name>
        <dbReference type="ChEBI" id="CHEBI:57692"/>
    </ligand>
</feature>
<feature type="binding site" evidence="1">
    <location>
        <position position="294"/>
    </location>
    <ligand>
        <name>FAD</name>
        <dbReference type="ChEBI" id="CHEBI:57692"/>
    </ligand>
</feature>
<name>GGR_METAC</name>
<protein>
    <recommendedName>
        <fullName evidence="1">Digeranylgeranylglycerophospholipid reductase</fullName>
        <shortName evidence="1">DGGGPL reductase</shortName>
        <ecNumber evidence="1 2">1.3.7.11</ecNumber>
    </recommendedName>
    <alternativeName>
        <fullName evidence="1">2,3-bis-O-geranylgeranylglyceryl phosphate reductase</fullName>
    </alternativeName>
    <alternativeName>
        <fullName evidence="1 3">Geranylgeranyl reductase</fullName>
        <shortName evidence="1 3">GGR</shortName>
    </alternativeName>
</protein>
<sequence length="407" mass="44503">MKDIYDVLVIGAGPAGSIAAKTAAEKGLDVLLIEKRQEIGDPVRCAEGVNKEYLKKHVEIDNSWICADLKGSRIYSPNGTKVEMAEEISGGEVGYVLERKIFDRALAEHAAKAGAEVRVKTRATGLIIEDDFVKGARLMNLGKEYEVRAKIVIGADGVESKVGRWAGIDTSLKPIDIETCAQYLIAGADIDPEYCEFYIGNEIAPGGYVWIFPKGEGKANVGVGILGNRTGKFKPRPVDYLNNFVEKKFPNAKIVEMVFGGVPVSGSIEKTSVNGLMLVGDAARQSDPITGGGILNAMDAGKIAGEAAYEAISSGDVSLEKLEEVYEKRWRETTGHDIDMSLIVKNCFINLKDEDLDSLADSLKEVKFESMRLFDLLQALFKANKKLLWDLRVLFKDAAKEVMKNRT</sequence>
<gene>
    <name type="ordered locus">MA_1484</name>
</gene>
<proteinExistence type="evidence at protein level"/>
<reference key="1">
    <citation type="journal article" date="2002" name="Genome Res.">
        <title>The genome of Methanosarcina acetivorans reveals extensive metabolic and physiological diversity.</title>
        <authorList>
            <person name="Galagan J.E."/>
            <person name="Nusbaum C."/>
            <person name="Roy A."/>
            <person name="Endrizzi M.G."/>
            <person name="Macdonald P."/>
            <person name="FitzHugh W."/>
            <person name="Calvo S."/>
            <person name="Engels R."/>
            <person name="Smirnov S."/>
            <person name="Atnoor D."/>
            <person name="Brown A."/>
            <person name="Allen N."/>
            <person name="Naylor J."/>
            <person name="Stange-Thomann N."/>
            <person name="DeArellano K."/>
            <person name="Johnson R."/>
            <person name="Linton L."/>
            <person name="McEwan P."/>
            <person name="McKernan K."/>
            <person name="Talamas J."/>
            <person name="Tirrell A."/>
            <person name="Ye W."/>
            <person name="Zimmer A."/>
            <person name="Barber R.D."/>
            <person name="Cann I."/>
            <person name="Graham D.E."/>
            <person name="Grahame D.A."/>
            <person name="Guss A.M."/>
            <person name="Hedderich R."/>
            <person name="Ingram-Smith C."/>
            <person name="Kuettner H.C."/>
            <person name="Krzycki J.A."/>
            <person name="Leigh J.A."/>
            <person name="Li W."/>
            <person name="Liu J."/>
            <person name="Mukhopadhyay B."/>
            <person name="Reeve J.N."/>
            <person name="Smith K."/>
            <person name="Springer T.A."/>
            <person name="Umayam L.A."/>
            <person name="White O."/>
            <person name="White R.H."/>
            <person name="de Macario E.C."/>
            <person name="Ferry J.G."/>
            <person name="Jarrell K.F."/>
            <person name="Jing H."/>
            <person name="Macario A.J.L."/>
            <person name="Paulsen I.T."/>
            <person name="Pritchett M."/>
            <person name="Sowers K.R."/>
            <person name="Swanson R.V."/>
            <person name="Zinder S.H."/>
            <person name="Lander E."/>
            <person name="Metcalf W.W."/>
            <person name="Birren B."/>
        </authorList>
    </citation>
    <scope>NUCLEOTIDE SEQUENCE [LARGE SCALE GENOMIC DNA]</scope>
    <source>
        <strain>ATCC 35395 / DSM 2834 / JCM 12185 / C2A</strain>
    </source>
</reference>
<reference key="2">
    <citation type="journal article" date="2014" name="J. Bacteriol.">
        <title>Geranylgeranyl reductase and ferredoxin from Methanosarcina acetivorans are required for the synthesis of fully reduced archaeal membrane lipid in Escherichia coli cells.</title>
        <authorList>
            <person name="Isobe K."/>
            <person name="Ogawa T."/>
            <person name="Hirose K."/>
            <person name="Yokoi T."/>
            <person name="Yoshimura T."/>
            <person name="Hemmi H."/>
        </authorList>
    </citation>
    <scope>FUNCTION</scope>
    <scope>CATALYTIC ACTIVITY</scope>
    <scope>PATHWAY</scope>
</reference>